<dbReference type="EC" id="2.7.1.148" evidence="1"/>
<dbReference type="EMBL" id="CP000239">
    <property type="protein sequence ID" value="ABC98506.1"/>
    <property type="molecule type" value="Genomic_DNA"/>
</dbReference>
<dbReference type="RefSeq" id="WP_011429195.1">
    <property type="nucleotide sequence ID" value="NC_007775.1"/>
</dbReference>
<dbReference type="SMR" id="Q2JQU4"/>
<dbReference type="STRING" id="321327.CYA_0285"/>
<dbReference type="KEGG" id="cya:CYA_0285"/>
<dbReference type="eggNOG" id="COG1947">
    <property type="taxonomic scope" value="Bacteria"/>
</dbReference>
<dbReference type="HOGENOM" id="CLU_053057_1_1_3"/>
<dbReference type="OrthoDB" id="9809438at2"/>
<dbReference type="UniPathway" id="UPA00056">
    <property type="reaction ID" value="UER00094"/>
</dbReference>
<dbReference type="Proteomes" id="UP000008818">
    <property type="component" value="Chromosome"/>
</dbReference>
<dbReference type="GO" id="GO:0050515">
    <property type="term" value="F:4-(cytidine 5'-diphospho)-2-C-methyl-D-erythritol kinase activity"/>
    <property type="evidence" value="ECO:0007669"/>
    <property type="project" value="UniProtKB-UniRule"/>
</dbReference>
<dbReference type="GO" id="GO:0005524">
    <property type="term" value="F:ATP binding"/>
    <property type="evidence" value="ECO:0007669"/>
    <property type="project" value="UniProtKB-UniRule"/>
</dbReference>
<dbReference type="GO" id="GO:0019288">
    <property type="term" value="P:isopentenyl diphosphate biosynthetic process, methylerythritol 4-phosphate pathway"/>
    <property type="evidence" value="ECO:0007669"/>
    <property type="project" value="UniProtKB-UniRule"/>
</dbReference>
<dbReference type="GO" id="GO:0016114">
    <property type="term" value="P:terpenoid biosynthetic process"/>
    <property type="evidence" value="ECO:0007669"/>
    <property type="project" value="InterPro"/>
</dbReference>
<dbReference type="Gene3D" id="3.30.230.10">
    <property type="match status" value="1"/>
</dbReference>
<dbReference type="Gene3D" id="3.30.70.890">
    <property type="entry name" value="GHMP kinase, C-terminal domain"/>
    <property type="match status" value="1"/>
</dbReference>
<dbReference type="HAMAP" id="MF_00061">
    <property type="entry name" value="IspE"/>
    <property type="match status" value="1"/>
</dbReference>
<dbReference type="InterPro" id="IPR013750">
    <property type="entry name" value="GHMP_kinase_C_dom"/>
</dbReference>
<dbReference type="InterPro" id="IPR036554">
    <property type="entry name" value="GHMP_kinase_C_sf"/>
</dbReference>
<dbReference type="InterPro" id="IPR006204">
    <property type="entry name" value="GHMP_kinase_N_dom"/>
</dbReference>
<dbReference type="InterPro" id="IPR004424">
    <property type="entry name" value="IspE"/>
</dbReference>
<dbReference type="InterPro" id="IPR020568">
    <property type="entry name" value="Ribosomal_Su5_D2-typ_SF"/>
</dbReference>
<dbReference type="InterPro" id="IPR014721">
    <property type="entry name" value="Ribsml_uS5_D2-typ_fold_subgr"/>
</dbReference>
<dbReference type="NCBIfam" id="TIGR00154">
    <property type="entry name" value="ispE"/>
    <property type="match status" value="1"/>
</dbReference>
<dbReference type="PANTHER" id="PTHR43527">
    <property type="entry name" value="4-DIPHOSPHOCYTIDYL-2-C-METHYL-D-ERYTHRITOL KINASE, CHLOROPLASTIC"/>
    <property type="match status" value="1"/>
</dbReference>
<dbReference type="PANTHER" id="PTHR43527:SF2">
    <property type="entry name" value="4-DIPHOSPHOCYTIDYL-2-C-METHYL-D-ERYTHRITOL KINASE, CHLOROPLASTIC"/>
    <property type="match status" value="1"/>
</dbReference>
<dbReference type="Pfam" id="PF08544">
    <property type="entry name" value="GHMP_kinases_C"/>
    <property type="match status" value="1"/>
</dbReference>
<dbReference type="Pfam" id="PF00288">
    <property type="entry name" value="GHMP_kinases_N"/>
    <property type="match status" value="1"/>
</dbReference>
<dbReference type="PIRSF" id="PIRSF010376">
    <property type="entry name" value="IspE"/>
    <property type="match status" value="1"/>
</dbReference>
<dbReference type="SUPFAM" id="SSF55060">
    <property type="entry name" value="GHMP Kinase, C-terminal domain"/>
    <property type="match status" value="1"/>
</dbReference>
<dbReference type="SUPFAM" id="SSF54211">
    <property type="entry name" value="Ribosomal protein S5 domain 2-like"/>
    <property type="match status" value="1"/>
</dbReference>
<evidence type="ECO:0000255" key="1">
    <source>
        <dbReference type="HAMAP-Rule" id="MF_00061"/>
    </source>
</evidence>
<organism>
    <name type="scientific">Synechococcus sp. (strain JA-3-3Ab)</name>
    <name type="common">Cyanobacteria bacterium Yellowstone A-Prime</name>
    <dbReference type="NCBI Taxonomy" id="321327"/>
    <lineage>
        <taxon>Bacteria</taxon>
        <taxon>Bacillati</taxon>
        <taxon>Cyanobacteriota</taxon>
        <taxon>Cyanophyceae</taxon>
        <taxon>Synechococcales</taxon>
        <taxon>Synechococcaceae</taxon>
        <taxon>Synechococcus</taxon>
    </lineage>
</organism>
<keyword id="KW-0067">ATP-binding</keyword>
<keyword id="KW-0414">Isoprene biosynthesis</keyword>
<keyword id="KW-0418">Kinase</keyword>
<keyword id="KW-0547">Nucleotide-binding</keyword>
<keyword id="KW-0808">Transferase</keyword>
<comment type="function">
    <text evidence="1">Catalyzes the phosphorylation of the position 2 hydroxy group of 4-diphosphocytidyl-2C-methyl-D-erythritol.</text>
</comment>
<comment type="catalytic activity">
    <reaction evidence="1">
        <text>4-CDP-2-C-methyl-D-erythritol + ATP = 4-CDP-2-C-methyl-D-erythritol 2-phosphate + ADP + H(+)</text>
        <dbReference type="Rhea" id="RHEA:18437"/>
        <dbReference type="ChEBI" id="CHEBI:15378"/>
        <dbReference type="ChEBI" id="CHEBI:30616"/>
        <dbReference type="ChEBI" id="CHEBI:57823"/>
        <dbReference type="ChEBI" id="CHEBI:57919"/>
        <dbReference type="ChEBI" id="CHEBI:456216"/>
        <dbReference type="EC" id="2.7.1.148"/>
    </reaction>
</comment>
<comment type="pathway">
    <text evidence="1">Isoprenoid biosynthesis; isopentenyl diphosphate biosynthesis via DXP pathway; isopentenyl diphosphate from 1-deoxy-D-xylulose 5-phosphate: step 3/6.</text>
</comment>
<comment type="similarity">
    <text evidence="1">Belongs to the GHMP kinase family. IspE subfamily.</text>
</comment>
<accession>Q2JQU4</accession>
<sequence length="309" mass="33009">MQACTLIARAKINLYLEILGSRPDGYSEVAMILQSITLADRVHLQRRPHGILLICDHPEVPADARNLAYRAAELLQRECRAELGVEIQLEKQIPVAAGLAGGSADAAAVLVGLNQLWGLGLTVGELQSLAARLGSDIPFCVQGGTQLATGRGEVLQPLADWEGIPLLLAKPRHLGVSTAWAYQAFRAHRAASLPSAGASLPTLPQVLAALERRDLLALARSLRNDLEQPVLAEHAIVGKLRQALLEAGALGSLMSGSGPTVFGIMASLERAAQARDSLCHHFPEVDFWVTQFAPTGILLEPDPQALRLP</sequence>
<proteinExistence type="inferred from homology"/>
<protein>
    <recommendedName>
        <fullName evidence="1">4-diphosphocytidyl-2-C-methyl-D-erythritol kinase</fullName>
        <shortName evidence="1">CMK</shortName>
        <ecNumber evidence="1">2.7.1.148</ecNumber>
    </recommendedName>
    <alternativeName>
        <fullName evidence="1">4-(cytidine-5'-diphospho)-2-C-methyl-D-erythritol kinase</fullName>
    </alternativeName>
</protein>
<reference key="1">
    <citation type="journal article" date="2007" name="ISME J.">
        <title>Population level functional diversity in a microbial community revealed by comparative genomic and metagenomic analyses.</title>
        <authorList>
            <person name="Bhaya D."/>
            <person name="Grossman A.R."/>
            <person name="Steunou A.-S."/>
            <person name="Khuri N."/>
            <person name="Cohan F.M."/>
            <person name="Hamamura N."/>
            <person name="Melendrez M.C."/>
            <person name="Bateson M.M."/>
            <person name="Ward D.M."/>
            <person name="Heidelberg J.F."/>
        </authorList>
    </citation>
    <scope>NUCLEOTIDE SEQUENCE [LARGE SCALE GENOMIC DNA]</scope>
    <source>
        <strain>JA-3-3Ab</strain>
    </source>
</reference>
<feature type="chain" id="PRO_0000235143" description="4-diphosphocytidyl-2-C-methyl-D-erythritol kinase">
    <location>
        <begin position="1"/>
        <end position="309"/>
    </location>
</feature>
<feature type="active site" evidence="1">
    <location>
        <position position="11"/>
    </location>
</feature>
<feature type="active site" evidence="1">
    <location>
        <position position="136"/>
    </location>
</feature>
<feature type="binding site" evidence="1">
    <location>
        <begin position="94"/>
        <end position="104"/>
    </location>
    <ligand>
        <name>ATP</name>
        <dbReference type="ChEBI" id="CHEBI:30616"/>
    </ligand>
</feature>
<name>ISPE_SYNJA</name>
<gene>
    <name evidence="1" type="primary">ispE</name>
    <name type="ordered locus">CYA_0285</name>
</gene>